<feature type="chain" id="PRO_0000252981" description="Glutamate 5-kinase">
    <location>
        <begin position="1"/>
        <end position="386"/>
    </location>
</feature>
<feature type="domain" description="PUA" evidence="1">
    <location>
        <begin position="294"/>
        <end position="372"/>
    </location>
</feature>
<feature type="binding site" evidence="1">
    <location>
        <position position="28"/>
    </location>
    <ligand>
        <name>ATP</name>
        <dbReference type="ChEBI" id="CHEBI:30616"/>
    </ligand>
</feature>
<feature type="binding site" evidence="1">
    <location>
        <position position="68"/>
    </location>
    <ligand>
        <name>substrate</name>
    </ligand>
</feature>
<feature type="binding site" evidence="1">
    <location>
        <position position="155"/>
    </location>
    <ligand>
        <name>substrate</name>
    </ligand>
</feature>
<feature type="binding site" evidence="1">
    <location>
        <position position="167"/>
    </location>
    <ligand>
        <name>substrate</name>
    </ligand>
</feature>
<feature type="binding site" evidence="1">
    <location>
        <begin position="187"/>
        <end position="188"/>
    </location>
    <ligand>
        <name>ATP</name>
        <dbReference type="ChEBI" id="CHEBI:30616"/>
    </ligand>
</feature>
<comment type="function">
    <text evidence="1">Catalyzes the transfer of a phosphate group to glutamate to form L-glutamate 5-phosphate.</text>
</comment>
<comment type="catalytic activity">
    <reaction evidence="1">
        <text>L-glutamate + ATP = L-glutamyl 5-phosphate + ADP</text>
        <dbReference type="Rhea" id="RHEA:14877"/>
        <dbReference type="ChEBI" id="CHEBI:29985"/>
        <dbReference type="ChEBI" id="CHEBI:30616"/>
        <dbReference type="ChEBI" id="CHEBI:58274"/>
        <dbReference type="ChEBI" id="CHEBI:456216"/>
        <dbReference type="EC" id="2.7.2.11"/>
    </reaction>
</comment>
<comment type="pathway">
    <text evidence="1">Amino-acid biosynthesis; L-proline biosynthesis; L-glutamate 5-semialdehyde from L-glutamate: step 1/2.</text>
</comment>
<comment type="subcellular location">
    <subcellularLocation>
        <location evidence="1">Cytoplasm</location>
    </subcellularLocation>
</comment>
<comment type="similarity">
    <text evidence="1">Belongs to the glutamate 5-kinase family.</text>
</comment>
<name>PROB_HAHCH</name>
<protein>
    <recommendedName>
        <fullName evidence="1">Glutamate 5-kinase</fullName>
        <ecNumber evidence="1">2.7.2.11</ecNumber>
    </recommendedName>
    <alternativeName>
        <fullName evidence="1">Gamma-glutamyl kinase</fullName>
        <shortName evidence="1">GK</shortName>
    </alternativeName>
</protein>
<sequence length="386" mass="41839">MSVRLQLGQLNESQARARLRETRRWVIKIGSALLTNDGRGLALDAMGLWVDQLAALRKDGVEVVIVSSGAVAEGMSRLGWRERPKLLDELQAAAAVGQMGLVQAWEAQFKRHGMQTAQILLTHEDLSDRKRYLNARGALCTLIDMGVAPIINENDTVVTDEIRFGDNDTLAALVANLVEADHLIILTDQSGLFDKDPRSNTDACLVGVAKANDTALDSMASGSSGALGRGGMFTKLRASRLASRSGAATVIVGGRIDSVLTRLRNGDELGTLLLPDQERWVARKQWLAGHLKTRGRLVLDDGAVRVLTQQGRSLLPVGVKSVDGGFQRGEMVSCYDLQGNEVARGLVNYDADEAVRIVGVASEKIESILGYINEPELIHRDNLVML</sequence>
<evidence type="ECO:0000255" key="1">
    <source>
        <dbReference type="HAMAP-Rule" id="MF_00456"/>
    </source>
</evidence>
<keyword id="KW-0028">Amino-acid biosynthesis</keyword>
<keyword id="KW-0067">ATP-binding</keyword>
<keyword id="KW-0963">Cytoplasm</keyword>
<keyword id="KW-0418">Kinase</keyword>
<keyword id="KW-0547">Nucleotide-binding</keyword>
<keyword id="KW-0641">Proline biosynthesis</keyword>
<keyword id="KW-1185">Reference proteome</keyword>
<keyword id="KW-0808">Transferase</keyword>
<reference key="1">
    <citation type="journal article" date="2005" name="Nucleic Acids Res.">
        <title>Genomic blueprint of Hahella chejuensis, a marine microbe producing an algicidal agent.</title>
        <authorList>
            <person name="Jeong H."/>
            <person name="Yim J.H."/>
            <person name="Lee C."/>
            <person name="Choi S.-H."/>
            <person name="Park Y.K."/>
            <person name="Yoon S.H."/>
            <person name="Hur C.-G."/>
            <person name="Kang H.-Y."/>
            <person name="Kim D."/>
            <person name="Lee H.H."/>
            <person name="Park K.H."/>
            <person name="Park S.-H."/>
            <person name="Park H.-S."/>
            <person name="Lee H.K."/>
            <person name="Oh T.K."/>
            <person name="Kim J.F."/>
        </authorList>
    </citation>
    <scope>NUCLEOTIDE SEQUENCE [LARGE SCALE GENOMIC DNA]</scope>
    <source>
        <strain>KCTC 2396</strain>
    </source>
</reference>
<gene>
    <name evidence="1" type="primary">proB</name>
    <name type="ordered locus">HCH_05938</name>
</gene>
<organism>
    <name type="scientific">Hahella chejuensis (strain KCTC 2396)</name>
    <dbReference type="NCBI Taxonomy" id="349521"/>
    <lineage>
        <taxon>Bacteria</taxon>
        <taxon>Pseudomonadati</taxon>
        <taxon>Pseudomonadota</taxon>
        <taxon>Gammaproteobacteria</taxon>
        <taxon>Oceanospirillales</taxon>
        <taxon>Hahellaceae</taxon>
        <taxon>Hahella</taxon>
    </lineage>
</organism>
<accession>Q2S9T4</accession>
<dbReference type="EC" id="2.7.2.11" evidence="1"/>
<dbReference type="EMBL" id="CP000155">
    <property type="protein sequence ID" value="ABC32590.1"/>
    <property type="molecule type" value="Genomic_DNA"/>
</dbReference>
<dbReference type="RefSeq" id="WP_011399648.1">
    <property type="nucleotide sequence ID" value="NC_007645.1"/>
</dbReference>
<dbReference type="SMR" id="Q2S9T4"/>
<dbReference type="STRING" id="349521.HCH_05938"/>
<dbReference type="KEGG" id="hch:HCH_05938"/>
<dbReference type="eggNOG" id="COG0263">
    <property type="taxonomic scope" value="Bacteria"/>
</dbReference>
<dbReference type="HOGENOM" id="CLU_025400_2_0_6"/>
<dbReference type="OrthoDB" id="9804434at2"/>
<dbReference type="UniPathway" id="UPA00098">
    <property type="reaction ID" value="UER00359"/>
</dbReference>
<dbReference type="Proteomes" id="UP000000238">
    <property type="component" value="Chromosome"/>
</dbReference>
<dbReference type="GO" id="GO:0005829">
    <property type="term" value="C:cytosol"/>
    <property type="evidence" value="ECO:0007669"/>
    <property type="project" value="TreeGrafter"/>
</dbReference>
<dbReference type="GO" id="GO:0005524">
    <property type="term" value="F:ATP binding"/>
    <property type="evidence" value="ECO:0007669"/>
    <property type="project" value="UniProtKB-KW"/>
</dbReference>
<dbReference type="GO" id="GO:0004349">
    <property type="term" value="F:glutamate 5-kinase activity"/>
    <property type="evidence" value="ECO:0007669"/>
    <property type="project" value="UniProtKB-UniRule"/>
</dbReference>
<dbReference type="GO" id="GO:0003723">
    <property type="term" value="F:RNA binding"/>
    <property type="evidence" value="ECO:0007669"/>
    <property type="project" value="InterPro"/>
</dbReference>
<dbReference type="GO" id="GO:0055129">
    <property type="term" value="P:L-proline biosynthetic process"/>
    <property type="evidence" value="ECO:0007669"/>
    <property type="project" value="UniProtKB-UniRule"/>
</dbReference>
<dbReference type="CDD" id="cd04242">
    <property type="entry name" value="AAK_G5K_ProB"/>
    <property type="match status" value="1"/>
</dbReference>
<dbReference type="CDD" id="cd21157">
    <property type="entry name" value="PUA_G5K"/>
    <property type="match status" value="1"/>
</dbReference>
<dbReference type="FunFam" id="2.30.130.10:FF:000007">
    <property type="entry name" value="Glutamate 5-kinase"/>
    <property type="match status" value="1"/>
</dbReference>
<dbReference type="FunFam" id="3.40.1160.10:FF:000018">
    <property type="entry name" value="Glutamate 5-kinase"/>
    <property type="match status" value="1"/>
</dbReference>
<dbReference type="Gene3D" id="3.40.1160.10">
    <property type="entry name" value="Acetylglutamate kinase-like"/>
    <property type="match status" value="2"/>
</dbReference>
<dbReference type="Gene3D" id="2.30.130.10">
    <property type="entry name" value="PUA domain"/>
    <property type="match status" value="1"/>
</dbReference>
<dbReference type="HAMAP" id="MF_00456">
    <property type="entry name" value="ProB"/>
    <property type="match status" value="1"/>
</dbReference>
<dbReference type="InterPro" id="IPR036393">
    <property type="entry name" value="AceGlu_kinase-like_sf"/>
</dbReference>
<dbReference type="InterPro" id="IPR001048">
    <property type="entry name" value="Asp/Glu/Uridylate_kinase"/>
</dbReference>
<dbReference type="InterPro" id="IPR041739">
    <property type="entry name" value="G5K_ProB"/>
</dbReference>
<dbReference type="InterPro" id="IPR001057">
    <property type="entry name" value="Glu/AcGlu_kinase"/>
</dbReference>
<dbReference type="InterPro" id="IPR011529">
    <property type="entry name" value="Glu_5kinase"/>
</dbReference>
<dbReference type="InterPro" id="IPR005715">
    <property type="entry name" value="Glu_5kinase/COase_Synthase"/>
</dbReference>
<dbReference type="InterPro" id="IPR019797">
    <property type="entry name" value="Glutamate_5-kinase_CS"/>
</dbReference>
<dbReference type="InterPro" id="IPR002478">
    <property type="entry name" value="PUA"/>
</dbReference>
<dbReference type="InterPro" id="IPR015947">
    <property type="entry name" value="PUA-like_sf"/>
</dbReference>
<dbReference type="InterPro" id="IPR036974">
    <property type="entry name" value="PUA_sf"/>
</dbReference>
<dbReference type="NCBIfam" id="TIGR01027">
    <property type="entry name" value="proB"/>
    <property type="match status" value="1"/>
</dbReference>
<dbReference type="PANTHER" id="PTHR43654">
    <property type="entry name" value="GLUTAMATE 5-KINASE"/>
    <property type="match status" value="1"/>
</dbReference>
<dbReference type="PANTHER" id="PTHR43654:SF1">
    <property type="entry name" value="ISOPENTENYL PHOSPHATE KINASE"/>
    <property type="match status" value="1"/>
</dbReference>
<dbReference type="Pfam" id="PF00696">
    <property type="entry name" value="AA_kinase"/>
    <property type="match status" value="1"/>
</dbReference>
<dbReference type="Pfam" id="PF01472">
    <property type="entry name" value="PUA"/>
    <property type="match status" value="1"/>
</dbReference>
<dbReference type="PIRSF" id="PIRSF000729">
    <property type="entry name" value="GK"/>
    <property type="match status" value="1"/>
</dbReference>
<dbReference type="PRINTS" id="PR00474">
    <property type="entry name" value="GLU5KINASE"/>
</dbReference>
<dbReference type="SMART" id="SM00359">
    <property type="entry name" value="PUA"/>
    <property type="match status" value="1"/>
</dbReference>
<dbReference type="SUPFAM" id="SSF53633">
    <property type="entry name" value="Carbamate kinase-like"/>
    <property type="match status" value="1"/>
</dbReference>
<dbReference type="SUPFAM" id="SSF88697">
    <property type="entry name" value="PUA domain-like"/>
    <property type="match status" value="1"/>
</dbReference>
<dbReference type="PROSITE" id="PS00902">
    <property type="entry name" value="GLUTAMATE_5_KINASE"/>
    <property type="match status" value="1"/>
</dbReference>
<dbReference type="PROSITE" id="PS50890">
    <property type="entry name" value="PUA"/>
    <property type="match status" value="1"/>
</dbReference>
<proteinExistence type="inferred from homology"/>